<evidence type="ECO:0000255" key="1">
    <source>
        <dbReference type="HAMAP-Rule" id="MF_01453"/>
    </source>
</evidence>
<gene>
    <name evidence="1" type="primary">rexB</name>
    <name type="ordered locus">Lreu_0049</name>
</gene>
<name>ADDB_LIMRD</name>
<keyword id="KW-0067">ATP-binding</keyword>
<keyword id="KW-0227">DNA damage</keyword>
<keyword id="KW-0234">DNA repair</keyword>
<keyword id="KW-0238">DNA-binding</keyword>
<keyword id="KW-0269">Exonuclease</keyword>
<keyword id="KW-0347">Helicase</keyword>
<keyword id="KW-0378">Hydrolase</keyword>
<keyword id="KW-0540">Nuclease</keyword>
<keyword id="KW-0547">Nucleotide-binding</keyword>
<keyword id="KW-1185">Reference proteome</keyword>
<feature type="chain" id="PRO_0000379376" description="ATP-dependent helicase/deoxyribonuclease subunit B">
    <location>
        <begin position="1"/>
        <end position="1260"/>
    </location>
</feature>
<reference key="1">
    <citation type="journal article" date="2011" name="PLoS Genet.">
        <title>The evolution of host specialization in the vertebrate gut symbiont Lactobacillus reuteri.</title>
        <authorList>
            <person name="Frese S.A."/>
            <person name="Benson A.K."/>
            <person name="Tannock G.W."/>
            <person name="Loach D.M."/>
            <person name="Kim J."/>
            <person name="Zhang M."/>
            <person name="Oh P.L."/>
            <person name="Heng N.C."/>
            <person name="Patil P.B."/>
            <person name="Juge N."/>
            <person name="Mackenzie D.A."/>
            <person name="Pearson B.M."/>
            <person name="Lapidus A."/>
            <person name="Dalin E."/>
            <person name="Tice H."/>
            <person name="Goltsman E."/>
            <person name="Land M."/>
            <person name="Hauser L."/>
            <person name="Ivanova N."/>
            <person name="Kyrpides N.C."/>
            <person name="Walter J."/>
        </authorList>
    </citation>
    <scope>NUCLEOTIDE SEQUENCE [LARGE SCALE GENOMIC DNA]</scope>
    <source>
        <strain>DSM 20016</strain>
    </source>
</reference>
<organism>
    <name type="scientific">Limosilactobacillus reuteri (strain DSM 20016)</name>
    <name type="common">Lactobacillus reuteri</name>
    <dbReference type="NCBI Taxonomy" id="557436"/>
    <lineage>
        <taxon>Bacteria</taxon>
        <taxon>Bacillati</taxon>
        <taxon>Bacillota</taxon>
        <taxon>Bacilli</taxon>
        <taxon>Lactobacillales</taxon>
        <taxon>Lactobacillaceae</taxon>
        <taxon>Limosilactobacillus</taxon>
    </lineage>
</organism>
<sequence>MGTLGFVLGTAAMDHQQVLIDQLVDQVKNTPADDTFYYLVPNHIKFETEINVLAGLRDRQGLSGSDRFASSRVQVLSFSRLAWYLLRDTPAFQKQHLSKIGMAMLTSQVVQEQASDLRLYASEVKQPGFIQKMTAQLEELKNANITADDLTDIIYRVKSANDPAANQAWLAKMYDVETIYHAYEARLRDRYIGNSELYRQLVSYLQKSPEVAKMHFFIDRFAQFTANEQQVVDALITNAASTTISLTLDRGYPDQNHPNPQELPPKNNLFYSSAMQFHRLWKFGQMHQKEVKVLQNVAFATTPRVDAELQQVDSYFKRYASEPIGPGEREELLDPQNIQFMTTTNRMTELNNVATQIRQLVASGKYRYRDFLILSRHLDGYQTMIEPVFAAHNIPVFNDHERLMDNHPLVTLLTTLLELPQRGYRTADIIQLLKTWLLVPRTGTGDLMGLSDFQAAVFTTENWCLKQAIEGKNAWTTNDPEKIKQLWQAPGTNLTDPKYEQSRLEKLNDQLALVKDFVANHLLPVFDQFKQAQTGQELATALYQFLAAMGVTDRLYAWQQYQSTRDLDLARQPQQVWTTFCQILQEYVEILGQQELRDGTNEVLADFSELLQAGFAAAQYSQIPATLDQVVVSETGIVQSENRKVVFMIGSTDDVMPEMQESDSLLTDQDKDILSAYLDEDFQYLPGTAIDQLIDEPFVHYTGFMNAKEQLIFSAPQSDSDDKELSISPYMHDMARYFGQPVREYPLATSKAGQDNAIDFVSAPLATINRLVEVSRQIRDEQGVGIDRQPVMPVGWQTVAESLVKLAKQWQQSADAKVQAEGISLGQRLSLVAAGFHYQNKIDSLGNKLAQALYLRAAPDDERGRVLYASISQLQDFYINQYEYFLKYGLRLQKRDELTLSNDRIGTFFHKAMETFVTTIRENNLSFADLAHKDNQMQRDQLIDHALVTAQENQPTLLRLINSSAQAQFQYQQLTAIVKTMLITLCRQAEYTGSQPVKTEVQFGRIGNQQPGNLGSLDYPLKDNHHIYLRGRIDRIDNLKQGNNNFLTVVDYKSSNHLFDLTSAYYGLSLQLLTYLNGLQANLTELETNNPRLAGALYLRLNNPTIKAAELKKSSLDDLKLKEHQYKGILLNDPQLLRELDKSLDKQAFLYPLKEYKNGKIKANKEALLVTPQQLDWLQNMNKELVINAGNQILSGDLKLNPYRLLTGSNRRTGLDYSDFLDVFQFDNMLDQQNYRDLNPNLAKEAFDNVVQDDDEEDKK</sequence>
<comment type="function">
    <text evidence="1">The heterodimer acts as both an ATP-dependent DNA helicase and an ATP-dependent, dual-direction single-stranded exonuclease. Recognizes the chi site generating a DNA molecule suitable for the initiation of homologous recombination. This subunit has 5' -&gt; 3' nuclease activity but not helicase activity.</text>
</comment>
<comment type="cofactor">
    <cofactor evidence="1">
        <name>Mg(2+)</name>
        <dbReference type="ChEBI" id="CHEBI:18420"/>
    </cofactor>
</comment>
<comment type="subunit">
    <text evidence="1">Heterodimer of AddA and RexB.</text>
</comment>
<comment type="miscellaneous">
    <text evidence="1">Despite having helicase-like domains, this subunit does not have helicase activity.</text>
</comment>
<comment type="similarity">
    <text evidence="1">Belongs to the helicase family. AddB/RexB type 2 subfamily.</text>
</comment>
<protein>
    <recommendedName>
        <fullName evidence="1">ATP-dependent helicase/deoxyribonuclease subunit B</fullName>
        <ecNumber evidence="1">3.1.-.-</ecNumber>
    </recommendedName>
    <alternativeName>
        <fullName evidence="1">ATP-dependent helicase/nuclease subunit RexB</fullName>
    </alternativeName>
</protein>
<accession>A5VHK1</accession>
<proteinExistence type="inferred from homology"/>
<dbReference type="EC" id="3.1.-.-" evidence="1"/>
<dbReference type="EMBL" id="CP000705">
    <property type="protein sequence ID" value="ABQ82325.1"/>
    <property type="molecule type" value="Genomic_DNA"/>
</dbReference>
<dbReference type="RefSeq" id="WP_003669564.1">
    <property type="nucleotide sequence ID" value="NC_009513.1"/>
</dbReference>
<dbReference type="SMR" id="A5VHK1"/>
<dbReference type="STRING" id="557436.Lreu_0049"/>
<dbReference type="KEGG" id="lre:Lreu_0049"/>
<dbReference type="PATRIC" id="fig|557436.17.peg.368"/>
<dbReference type="eggNOG" id="COG3857">
    <property type="taxonomic scope" value="Bacteria"/>
</dbReference>
<dbReference type="HOGENOM" id="CLU_007838_0_0_9"/>
<dbReference type="OMA" id="IVPNHIK"/>
<dbReference type="Proteomes" id="UP000001991">
    <property type="component" value="Chromosome"/>
</dbReference>
<dbReference type="GO" id="GO:0008409">
    <property type="term" value="F:5'-3' exonuclease activity"/>
    <property type="evidence" value="ECO:0007669"/>
    <property type="project" value="UniProtKB-UniRule"/>
</dbReference>
<dbReference type="GO" id="GO:0005524">
    <property type="term" value="F:ATP binding"/>
    <property type="evidence" value="ECO:0007669"/>
    <property type="project" value="UniProtKB-UniRule"/>
</dbReference>
<dbReference type="GO" id="GO:0003690">
    <property type="term" value="F:double-stranded DNA binding"/>
    <property type="evidence" value="ECO:0007669"/>
    <property type="project" value="UniProtKB-UniRule"/>
</dbReference>
<dbReference type="GO" id="GO:0004386">
    <property type="term" value="F:helicase activity"/>
    <property type="evidence" value="ECO:0007669"/>
    <property type="project" value="UniProtKB-KW"/>
</dbReference>
<dbReference type="GO" id="GO:0016817">
    <property type="term" value="F:hydrolase activity, acting on acid anhydrides"/>
    <property type="evidence" value="ECO:0007669"/>
    <property type="project" value="InterPro"/>
</dbReference>
<dbReference type="GO" id="GO:0000724">
    <property type="term" value="P:double-strand break repair via homologous recombination"/>
    <property type="evidence" value="ECO:0007669"/>
    <property type="project" value="UniProtKB-UniRule"/>
</dbReference>
<dbReference type="Gene3D" id="3.90.320.10">
    <property type="match status" value="1"/>
</dbReference>
<dbReference type="Gene3D" id="3.40.50.300">
    <property type="entry name" value="P-loop containing nucleotide triphosphate hydrolases"/>
    <property type="match status" value="3"/>
</dbReference>
<dbReference type="HAMAP" id="MF_01453">
    <property type="entry name" value="AddB_type2"/>
    <property type="match status" value="1"/>
</dbReference>
<dbReference type="InterPro" id="IPR049035">
    <property type="entry name" value="ADDB_N"/>
</dbReference>
<dbReference type="InterPro" id="IPR014141">
    <property type="entry name" value="DNA_helicase_suRexB"/>
</dbReference>
<dbReference type="InterPro" id="IPR027417">
    <property type="entry name" value="P-loop_NTPase"/>
</dbReference>
<dbReference type="InterPro" id="IPR011604">
    <property type="entry name" value="PDDEXK-like_dom_sf"/>
</dbReference>
<dbReference type="InterPro" id="IPR038726">
    <property type="entry name" value="PDDEXK_AddAB-type"/>
</dbReference>
<dbReference type="PANTHER" id="PTHR30591">
    <property type="entry name" value="RECBCD ENZYME SUBUNIT RECC"/>
    <property type="match status" value="1"/>
</dbReference>
<dbReference type="PANTHER" id="PTHR30591:SF1">
    <property type="entry name" value="RECBCD ENZYME SUBUNIT RECC"/>
    <property type="match status" value="1"/>
</dbReference>
<dbReference type="Pfam" id="PF21445">
    <property type="entry name" value="ADDB_N"/>
    <property type="match status" value="1"/>
</dbReference>
<dbReference type="Pfam" id="PF12705">
    <property type="entry name" value="PDDEXK_1"/>
    <property type="match status" value="1"/>
</dbReference>
<dbReference type="SUPFAM" id="SSF52540">
    <property type="entry name" value="P-loop containing nucleoside triphosphate hydrolases"/>
    <property type="match status" value="1"/>
</dbReference>